<protein>
    <recommendedName>
        <fullName evidence="1">tRNA-specific 2-thiouridylase MnmA</fullName>
        <ecNumber evidence="1">2.8.1.13</ecNumber>
    </recommendedName>
</protein>
<accession>A4G213</accession>
<organism>
    <name type="scientific">Herminiimonas arsenicoxydans</name>
    <dbReference type="NCBI Taxonomy" id="204773"/>
    <lineage>
        <taxon>Bacteria</taxon>
        <taxon>Pseudomonadati</taxon>
        <taxon>Pseudomonadota</taxon>
        <taxon>Betaproteobacteria</taxon>
        <taxon>Burkholderiales</taxon>
        <taxon>Oxalobacteraceae</taxon>
        <taxon>Herminiimonas</taxon>
    </lineage>
</organism>
<dbReference type="EC" id="2.8.1.13" evidence="1"/>
<dbReference type="EMBL" id="CU207211">
    <property type="protein sequence ID" value="CAL60550.1"/>
    <property type="molecule type" value="Genomic_DNA"/>
</dbReference>
<dbReference type="SMR" id="A4G213"/>
<dbReference type="STRING" id="204773.HEAR0326"/>
<dbReference type="KEGG" id="har:HEAR0326"/>
<dbReference type="eggNOG" id="COG0482">
    <property type="taxonomic scope" value="Bacteria"/>
</dbReference>
<dbReference type="HOGENOM" id="CLU_035188_1_0_4"/>
<dbReference type="OrthoDB" id="9800696at2"/>
<dbReference type="Proteomes" id="UP000006697">
    <property type="component" value="Chromosome"/>
</dbReference>
<dbReference type="GO" id="GO:0005737">
    <property type="term" value="C:cytoplasm"/>
    <property type="evidence" value="ECO:0007669"/>
    <property type="project" value="UniProtKB-SubCell"/>
</dbReference>
<dbReference type="GO" id="GO:0005524">
    <property type="term" value="F:ATP binding"/>
    <property type="evidence" value="ECO:0007669"/>
    <property type="project" value="UniProtKB-KW"/>
</dbReference>
<dbReference type="GO" id="GO:0000049">
    <property type="term" value="F:tRNA binding"/>
    <property type="evidence" value="ECO:0007669"/>
    <property type="project" value="UniProtKB-KW"/>
</dbReference>
<dbReference type="GO" id="GO:0103016">
    <property type="term" value="F:tRNA-uridine 2-sulfurtransferase activity"/>
    <property type="evidence" value="ECO:0007669"/>
    <property type="project" value="UniProtKB-EC"/>
</dbReference>
<dbReference type="GO" id="GO:0002143">
    <property type="term" value="P:tRNA wobble position uridine thiolation"/>
    <property type="evidence" value="ECO:0007669"/>
    <property type="project" value="TreeGrafter"/>
</dbReference>
<dbReference type="CDD" id="cd01998">
    <property type="entry name" value="MnmA_TRMU-like"/>
    <property type="match status" value="1"/>
</dbReference>
<dbReference type="FunFam" id="2.30.30.280:FF:000001">
    <property type="entry name" value="tRNA-specific 2-thiouridylase MnmA"/>
    <property type="match status" value="1"/>
</dbReference>
<dbReference type="FunFam" id="2.40.30.10:FF:000023">
    <property type="entry name" value="tRNA-specific 2-thiouridylase MnmA"/>
    <property type="match status" value="1"/>
</dbReference>
<dbReference type="FunFam" id="3.40.50.620:FF:000004">
    <property type="entry name" value="tRNA-specific 2-thiouridylase MnmA"/>
    <property type="match status" value="1"/>
</dbReference>
<dbReference type="Gene3D" id="2.30.30.280">
    <property type="entry name" value="Adenine nucleotide alpha hydrolases-like domains"/>
    <property type="match status" value="1"/>
</dbReference>
<dbReference type="Gene3D" id="3.40.50.620">
    <property type="entry name" value="HUPs"/>
    <property type="match status" value="1"/>
</dbReference>
<dbReference type="Gene3D" id="2.40.30.10">
    <property type="entry name" value="Translation factors"/>
    <property type="match status" value="1"/>
</dbReference>
<dbReference type="HAMAP" id="MF_00144">
    <property type="entry name" value="tRNA_thiouridyl_MnmA"/>
    <property type="match status" value="1"/>
</dbReference>
<dbReference type="InterPro" id="IPR004506">
    <property type="entry name" value="MnmA-like"/>
</dbReference>
<dbReference type="InterPro" id="IPR046885">
    <property type="entry name" value="MnmA-like_C"/>
</dbReference>
<dbReference type="InterPro" id="IPR046884">
    <property type="entry name" value="MnmA-like_central"/>
</dbReference>
<dbReference type="InterPro" id="IPR023382">
    <property type="entry name" value="MnmA-like_central_sf"/>
</dbReference>
<dbReference type="InterPro" id="IPR014729">
    <property type="entry name" value="Rossmann-like_a/b/a_fold"/>
</dbReference>
<dbReference type="NCBIfam" id="NF001138">
    <property type="entry name" value="PRK00143.1"/>
    <property type="match status" value="1"/>
</dbReference>
<dbReference type="NCBIfam" id="TIGR00420">
    <property type="entry name" value="trmU"/>
    <property type="match status" value="1"/>
</dbReference>
<dbReference type="PANTHER" id="PTHR11933:SF5">
    <property type="entry name" value="MITOCHONDRIAL TRNA-SPECIFIC 2-THIOURIDYLASE 1"/>
    <property type="match status" value="1"/>
</dbReference>
<dbReference type="PANTHER" id="PTHR11933">
    <property type="entry name" value="TRNA 5-METHYLAMINOMETHYL-2-THIOURIDYLATE -METHYLTRANSFERASE"/>
    <property type="match status" value="1"/>
</dbReference>
<dbReference type="Pfam" id="PF03054">
    <property type="entry name" value="tRNA_Me_trans"/>
    <property type="match status" value="1"/>
</dbReference>
<dbReference type="Pfam" id="PF20258">
    <property type="entry name" value="tRNA_Me_trans_C"/>
    <property type="match status" value="1"/>
</dbReference>
<dbReference type="Pfam" id="PF20259">
    <property type="entry name" value="tRNA_Me_trans_M"/>
    <property type="match status" value="1"/>
</dbReference>
<dbReference type="SUPFAM" id="SSF52402">
    <property type="entry name" value="Adenine nucleotide alpha hydrolases-like"/>
    <property type="match status" value="1"/>
</dbReference>
<comment type="function">
    <text evidence="1">Catalyzes the 2-thiolation of uridine at the wobble position (U34) of tRNA, leading to the formation of s(2)U34.</text>
</comment>
<comment type="catalytic activity">
    <reaction evidence="1">
        <text>S-sulfanyl-L-cysteinyl-[protein] + uridine(34) in tRNA + AH2 + ATP = 2-thiouridine(34) in tRNA + L-cysteinyl-[protein] + A + AMP + diphosphate + H(+)</text>
        <dbReference type="Rhea" id="RHEA:47032"/>
        <dbReference type="Rhea" id="RHEA-COMP:10131"/>
        <dbReference type="Rhea" id="RHEA-COMP:11726"/>
        <dbReference type="Rhea" id="RHEA-COMP:11727"/>
        <dbReference type="Rhea" id="RHEA-COMP:11728"/>
        <dbReference type="ChEBI" id="CHEBI:13193"/>
        <dbReference type="ChEBI" id="CHEBI:15378"/>
        <dbReference type="ChEBI" id="CHEBI:17499"/>
        <dbReference type="ChEBI" id="CHEBI:29950"/>
        <dbReference type="ChEBI" id="CHEBI:30616"/>
        <dbReference type="ChEBI" id="CHEBI:33019"/>
        <dbReference type="ChEBI" id="CHEBI:61963"/>
        <dbReference type="ChEBI" id="CHEBI:65315"/>
        <dbReference type="ChEBI" id="CHEBI:87170"/>
        <dbReference type="ChEBI" id="CHEBI:456215"/>
        <dbReference type="EC" id="2.8.1.13"/>
    </reaction>
</comment>
<comment type="subcellular location">
    <subcellularLocation>
        <location evidence="1">Cytoplasm</location>
    </subcellularLocation>
</comment>
<comment type="similarity">
    <text evidence="1">Belongs to the MnmA/TRMU family.</text>
</comment>
<name>MNMA_HERAR</name>
<feature type="chain" id="PRO_0000349662" description="tRNA-specific 2-thiouridylase MnmA">
    <location>
        <begin position="1"/>
        <end position="372"/>
    </location>
</feature>
<feature type="region of interest" description="Interaction with target base in tRNA" evidence="1">
    <location>
        <begin position="95"/>
        <end position="97"/>
    </location>
</feature>
<feature type="region of interest" description="Interaction with tRNA" evidence="1">
    <location>
        <begin position="151"/>
        <end position="153"/>
    </location>
</feature>
<feature type="region of interest" description="Interaction with tRNA" evidence="1">
    <location>
        <begin position="317"/>
        <end position="318"/>
    </location>
</feature>
<feature type="active site" description="Nucleophile" evidence="1">
    <location>
        <position position="100"/>
    </location>
</feature>
<feature type="active site" description="Cysteine persulfide intermediate" evidence="1">
    <location>
        <position position="201"/>
    </location>
</feature>
<feature type="binding site" evidence="1">
    <location>
        <begin position="9"/>
        <end position="16"/>
    </location>
    <ligand>
        <name>ATP</name>
        <dbReference type="ChEBI" id="CHEBI:30616"/>
    </ligand>
</feature>
<feature type="binding site" evidence="1">
    <location>
        <position position="35"/>
    </location>
    <ligand>
        <name>ATP</name>
        <dbReference type="ChEBI" id="CHEBI:30616"/>
    </ligand>
</feature>
<feature type="binding site" evidence="1">
    <location>
        <position position="124"/>
    </location>
    <ligand>
        <name>ATP</name>
        <dbReference type="ChEBI" id="CHEBI:30616"/>
    </ligand>
</feature>
<feature type="site" description="Interaction with tRNA" evidence="1">
    <location>
        <position position="125"/>
    </location>
</feature>
<feature type="site" description="Interaction with tRNA" evidence="1">
    <location>
        <position position="349"/>
    </location>
</feature>
<feature type="disulfide bond" description="Alternate" evidence="1">
    <location>
        <begin position="100"/>
        <end position="201"/>
    </location>
</feature>
<gene>
    <name evidence="1" type="primary">mnmA</name>
    <name type="ordered locus">HEAR0326</name>
</gene>
<reference key="1">
    <citation type="journal article" date="2007" name="PLoS Genet.">
        <title>A tale of two oxidation states: bacterial colonization of arsenic-rich environments.</title>
        <authorList>
            <person name="Muller D."/>
            <person name="Medigue C."/>
            <person name="Koechler S."/>
            <person name="Barbe V."/>
            <person name="Barakat M."/>
            <person name="Talla E."/>
            <person name="Bonnefoy V."/>
            <person name="Krin E."/>
            <person name="Arsene-Ploetze F."/>
            <person name="Carapito C."/>
            <person name="Chandler M."/>
            <person name="Cournoyer B."/>
            <person name="Cruveiller S."/>
            <person name="Dossat C."/>
            <person name="Duval S."/>
            <person name="Heymann M."/>
            <person name="Leize E."/>
            <person name="Lieutaud A."/>
            <person name="Lievremont D."/>
            <person name="Makita Y."/>
            <person name="Mangenot S."/>
            <person name="Nitschke W."/>
            <person name="Ortet P."/>
            <person name="Perdrial N."/>
            <person name="Schoepp B."/>
            <person name="Siguier P."/>
            <person name="Simeonova D.D."/>
            <person name="Rouy Z."/>
            <person name="Segurens B."/>
            <person name="Turlin E."/>
            <person name="Vallenet D."/>
            <person name="van Dorsselaer A."/>
            <person name="Weiss S."/>
            <person name="Weissenbach J."/>
            <person name="Lett M.-C."/>
            <person name="Danchin A."/>
            <person name="Bertin P.N."/>
        </authorList>
    </citation>
    <scope>NUCLEOTIDE SEQUENCE [LARGE SCALE GENOMIC DNA]</scope>
    <source>
        <strain>ULPAs1</strain>
    </source>
</reference>
<evidence type="ECO:0000255" key="1">
    <source>
        <dbReference type="HAMAP-Rule" id="MF_00144"/>
    </source>
</evidence>
<proteinExistence type="inferred from homology"/>
<sequence>MAKKRVVIGMSGGVDSSVSAWLLKEQGYEVIGLFMKNWEDDDDSEYCSTRQDWIDAASVADVVGVDIEAVNFAAEYKDRVFAEFLREYEAGRTPNPDVLCNAEIKFKAFLDHAMLLGADMIATGHYARVREVTSGPDAGQVQLLKAVDASKDQSYFLHRLNQAQLSKTLFPLGEIRKTEVRKIAEQLQLPNASKKDSTGICFIGERPFREFLNRYLSYQPGPMKTPDGTIVGEHVGLSFYTLGQRKGIGLGGMKTHKNTDGNSGPWYVARKDVANNTLYIVQGHDHPWLLSSALSAGQMSWVAGRAPSEELVAAKTRYRQADVACSQHATADNLALAFDTPQWAVTPGQSAVLYQGDVCLGGGIITASTLTE</sequence>
<keyword id="KW-0067">ATP-binding</keyword>
<keyword id="KW-0963">Cytoplasm</keyword>
<keyword id="KW-1015">Disulfide bond</keyword>
<keyword id="KW-0547">Nucleotide-binding</keyword>
<keyword id="KW-1185">Reference proteome</keyword>
<keyword id="KW-0694">RNA-binding</keyword>
<keyword id="KW-0808">Transferase</keyword>
<keyword id="KW-0819">tRNA processing</keyword>
<keyword id="KW-0820">tRNA-binding</keyword>